<sequence>MNYLVMISFALLLMKGVESVRDAYIAKPENCVYHCAGNEGCNKLCTDNGAESGYCQWGGRYGNACWCIKLPDDVPIRVPGKCHR</sequence>
<organism>
    <name type="scientific">Olivierus martensii</name>
    <name type="common">Manchurian scorpion</name>
    <name type="synonym">Mesobuthus martensii</name>
    <dbReference type="NCBI Taxonomy" id="34649"/>
    <lineage>
        <taxon>Eukaryota</taxon>
        <taxon>Metazoa</taxon>
        <taxon>Ecdysozoa</taxon>
        <taxon>Arthropoda</taxon>
        <taxon>Chelicerata</taxon>
        <taxon>Arachnida</taxon>
        <taxon>Scorpiones</taxon>
        <taxon>Buthida</taxon>
        <taxon>Buthoidea</taxon>
        <taxon>Buthidae</taxon>
        <taxon>Olivierus</taxon>
    </lineage>
</organism>
<dbReference type="EMBL" id="AF155363">
    <property type="protein sequence ID" value="AAF31477.1"/>
    <property type="molecule type" value="mRNA"/>
</dbReference>
<dbReference type="PIR" id="JE0143">
    <property type="entry name" value="JE0143"/>
</dbReference>
<dbReference type="SMR" id="Q9NJC8"/>
<dbReference type="GO" id="GO:0005576">
    <property type="term" value="C:extracellular region"/>
    <property type="evidence" value="ECO:0007669"/>
    <property type="project" value="UniProtKB-SubCell"/>
</dbReference>
<dbReference type="GO" id="GO:0019871">
    <property type="term" value="F:sodium channel inhibitor activity"/>
    <property type="evidence" value="ECO:0007669"/>
    <property type="project" value="InterPro"/>
</dbReference>
<dbReference type="GO" id="GO:0090729">
    <property type="term" value="F:toxin activity"/>
    <property type="evidence" value="ECO:0007669"/>
    <property type="project" value="UniProtKB-KW"/>
</dbReference>
<dbReference type="GO" id="GO:0006952">
    <property type="term" value="P:defense response"/>
    <property type="evidence" value="ECO:0007669"/>
    <property type="project" value="InterPro"/>
</dbReference>
<dbReference type="CDD" id="cd23106">
    <property type="entry name" value="neurotoxins_LC_scorpion"/>
    <property type="match status" value="1"/>
</dbReference>
<dbReference type="FunFam" id="3.30.30.10:FF:000002">
    <property type="entry name" value="Alpha-like toxin BmK-M1"/>
    <property type="match status" value="1"/>
</dbReference>
<dbReference type="Gene3D" id="3.30.30.10">
    <property type="entry name" value="Knottin, scorpion toxin-like"/>
    <property type="match status" value="1"/>
</dbReference>
<dbReference type="InterPro" id="IPR044062">
    <property type="entry name" value="LCN-type_CS_alpha_beta_dom"/>
</dbReference>
<dbReference type="InterPro" id="IPR003614">
    <property type="entry name" value="Scorpion_toxin-like"/>
</dbReference>
<dbReference type="InterPro" id="IPR036574">
    <property type="entry name" value="Scorpion_toxin-like_sf"/>
</dbReference>
<dbReference type="InterPro" id="IPR018218">
    <property type="entry name" value="Scorpion_toxinL"/>
</dbReference>
<dbReference type="InterPro" id="IPR002061">
    <property type="entry name" value="Scorpion_toxinL/defensin"/>
</dbReference>
<dbReference type="Pfam" id="PF00537">
    <property type="entry name" value="Toxin_3"/>
    <property type="match status" value="1"/>
</dbReference>
<dbReference type="PRINTS" id="PR00285">
    <property type="entry name" value="SCORPNTOXIN"/>
</dbReference>
<dbReference type="SMART" id="SM00505">
    <property type="entry name" value="Knot1"/>
    <property type="match status" value="1"/>
</dbReference>
<dbReference type="SUPFAM" id="SSF57095">
    <property type="entry name" value="Scorpion toxin-like"/>
    <property type="match status" value="1"/>
</dbReference>
<dbReference type="PROSITE" id="PS51863">
    <property type="entry name" value="LCN_CSAB"/>
    <property type="match status" value="1"/>
</dbReference>
<reference key="1">
    <citation type="journal article" date="2000" name="Toxicon">
        <title>Nine novel precursors of Buthus martensii scorpion alpha-toxin homologues.</title>
        <authorList>
            <person name="Zhu S.-Y."/>
            <person name="Li W.-X."/>
            <person name="Zeng X.-C."/>
            <person name="Liu H."/>
            <person name="Jiang D.-H."/>
            <person name="Mao X."/>
        </authorList>
    </citation>
    <scope>NUCLEOTIDE SEQUENCE [MRNA]</scope>
    <source>
        <tissue>Venom gland</tissue>
    </source>
</reference>
<comment type="function">
    <text evidence="1">Alpha toxins bind voltage-independently at site-3 of sodium channels (Nav) and inhibit the inactivation of the activated channels, thereby blocking neuronal transmission. This toxin is active against mammals (By similarity).</text>
</comment>
<comment type="subcellular location">
    <subcellularLocation>
        <location>Secreted</location>
    </subcellularLocation>
</comment>
<comment type="tissue specificity">
    <text>Expressed by the venom gland.</text>
</comment>
<comment type="domain">
    <text evidence="3">Has the structural arrangement of an alpha-helix connected to antiparallel beta-sheets by disulfide bonds (CS-alpha/beta).</text>
</comment>
<comment type="similarity">
    <text evidence="3">Belongs to the long (4 C-C) scorpion toxin superfamily. Sodium channel inhibitor family. Alpha subfamily.</text>
</comment>
<proteinExistence type="evidence at transcript level"/>
<accession>Q9NJC8</accession>
<protein>
    <recommendedName>
        <fullName>Toxin BmKaTx13</fullName>
    </recommendedName>
    <alternativeName>
        <fullName>Alpha-neurotoxin Tx13</fullName>
    </alternativeName>
    <alternativeName>
        <fullName>BmKalphaTx13</fullName>
    </alternativeName>
</protein>
<name>SC13_OLIMR</name>
<evidence type="ECO:0000250" key="1"/>
<evidence type="ECO:0000255" key="2">
    <source>
        <dbReference type="PROSITE-ProRule" id="PRU01210"/>
    </source>
</evidence>
<evidence type="ECO:0000305" key="3"/>
<keyword id="KW-1015">Disulfide bond</keyword>
<keyword id="KW-0872">Ion channel impairing toxin</keyword>
<keyword id="KW-0528">Neurotoxin</keyword>
<keyword id="KW-0964">Secreted</keyword>
<keyword id="KW-0732">Signal</keyword>
<keyword id="KW-0800">Toxin</keyword>
<keyword id="KW-0738">Voltage-gated sodium channel impairing toxin</keyword>
<feature type="signal peptide" evidence="1">
    <location>
        <begin position="1"/>
        <end position="19"/>
    </location>
</feature>
<feature type="chain" id="PRO_0000035248" description="Toxin BmKaTx13">
    <location>
        <begin position="20"/>
        <end position="83"/>
    </location>
</feature>
<feature type="propeptide" id="PRO_0000035249" description="Removed by a carboxypeptidase" evidence="3">
    <location>
        <position position="84"/>
    </location>
</feature>
<feature type="domain" description="LCN-type CS-alpha/beta" evidence="2">
    <location>
        <begin position="21"/>
        <end position="83"/>
    </location>
</feature>
<feature type="disulfide bond" evidence="2">
    <location>
        <begin position="31"/>
        <end position="82"/>
    </location>
</feature>
<feature type="disulfide bond" evidence="2">
    <location>
        <begin position="35"/>
        <end position="55"/>
    </location>
</feature>
<feature type="disulfide bond" evidence="2">
    <location>
        <begin position="41"/>
        <end position="65"/>
    </location>
</feature>
<feature type="disulfide bond" evidence="2">
    <location>
        <begin position="45"/>
        <end position="67"/>
    </location>
</feature>